<proteinExistence type="inferred from homology"/>
<evidence type="ECO:0000250" key="1"/>
<evidence type="ECO:0000305" key="2"/>
<name>GEP5_YEAS2</name>
<gene>
    <name type="primary">GEP5</name>
    <name type="synonym">RRG5</name>
    <name type="ORF">C1Q_02691</name>
</gene>
<sequence length="293" mass="33882">MASQVNALLLPVIESTPLHQITKVALTTTLTSKQSDYKFKEIAVPLTKSLQLYEKAQRRQDLRASLKALESIIYQTHFQWNNPLPRHAHLFQKHYHFLLTHWPFENHRDLVDSIAVNNGKLNSTSSRSVWLKADWITLFNVKNPWVQTPPSLMRLSGTDLDTFTPERIFLINSLGNHYKFLIANSHLSYNHKKYPSPGVQIPIRNALGEVSPAKQIAQLFARQLSHIYKSLFIENPPLSPENELALTAVFYDETVERRLRRLYMRACARAYTTTNADSTTEPLMFHCTRWEVD</sequence>
<comment type="function">
    <text evidence="1">Essential for respiratory growth and required for maintenance of mtDNA. Required for cell survival in the absence of prohibitins (By similarity).</text>
</comment>
<comment type="subcellular location">
    <subcellularLocation>
        <location evidence="1">Mitochondrion</location>
    </subcellularLocation>
</comment>
<comment type="similarity">
    <text evidence="2">Belongs to the GEP5 family.</text>
</comment>
<dbReference type="EMBL" id="ACFL01000129">
    <property type="protein sequence ID" value="EEU06890.1"/>
    <property type="molecule type" value="Genomic_DNA"/>
</dbReference>
<dbReference type="Proteomes" id="UP000008073">
    <property type="component" value="Unassembled WGS sequence"/>
</dbReference>
<dbReference type="GO" id="GO:0005739">
    <property type="term" value="C:mitochondrion"/>
    <property type="evidence" value="ECO:0007669"/>
    <property type="project" value="UniProtKB-SubCell"/>
</dbReference>
<dbReference type="GO" id="GO:0000002">
    <property type="term" value="P:mitochondrial genome maintenance"/>
    <property type="evidence" value="ECO:0007669"/>
    <property type="project" value="InterPro"/>
</dbReference>
<dbReference type="InterPro" id="IPR031455">
    <property type="entry name" value="Gep5"/>
</dbReference>
<dbReference type="Pfam" id="PF17053">
    <property type="entry name" value="GEP5"/>
    <property type="match status" value="1"/>
</dbReference>
<feature type="chain" id="PRO_0000399689" description="Genetic interactor of prohibitin 5, mitochondrial">
    <location>
        <begin position="1"/>
        <end position="293"/>
    </location>
</feature>
<reference key="1">
    <citation type="journal article" date="2009" name="Genome Res.">
        <title>Genome structure of a Saccharomyces cerevisiae strain widely used in bioethanol production.</title>
        <authorList>
            <person name="Argueso J.L."/>
            <person name="Carazzolle M.F."/>
            <person name="Mieczkowski P.A."/>
            <person name="Duarte F.M."/>
            <person name="Netto O.V.C."/>
            <person name="Missawa S.K."/>
            <person name="Galzerani F."/>
            <person name="Costa G.G.L."/>
            <person name="Vidal R.O."/>
            <person name="Noronha M.F."/>
            <person name="Dominska M."/>
            <person name="Andrietta M.G.S."/>
            <person name="Andrietta S.R."/>
            <person name="Cunha A.F."/>
            <person name="Gomes L.H."/>
            <person name="Tavares F.C.A."/>
            <person name="Alcarde A.R."/>
            <person name="Dietrich F.S."/>
            <person name="McCusker J.H."/>
            <person name="Petes T.D."/>
            <person name="Pereira G.A.G."/>
        </authorList>
    </citation>
    <scope>NUCLEOTIDE SEQUENCE [LARGE SCALE GENOMIC DNA]</scope>
    <source>
        <strain>JAY291</strain>
    </source>
</reference>
<organism>
    <name type="scientific">Saccharomyces cerevisiae (strain JAY291)</name>
    <name type="common">Baker's yeast</name>
    <dbReference type="NCBI Taxonomy" id="574961"/>
    <lineage>
        <taxon>Eukaryota</taxon>
        <taxon>Fungi</taxon>
        <taxon>Dikarya</taxon>
        <taxon>Ascomycota</taxon>
        <taxon>Saccharomycotina</taxon>
        <taxon>Saccharomycetes</taxon>
        <taxon>Saccharomycetales</taxon>
        <taxon>Saccharomycetaceae</taxon>
        <taxon>Saccharomyces</taxon>
    </lineage>
</organism>
<accession>C7GQR4</accession>
<protein>
    <recommendedName>
        <fullName>Genetic interactor of prohibitin 5, mitochondrial</fullName>
    </recommendedName>
    <alternativeName>
        <fullName>Required for respiratory growth protein 5</fullName>
    </alternativeName>
</protein>
<keyword id="KW-0496">Mitochondrion</keyword>